<dbReference type="EMBL" id="AE017346">
    <property type="protein sequence ID" value="AAW44213.1"/>
    <property type="molecule type" value="Genomic_DNA"/>
</dbReference>
<dbReference type="RefSeq" id="XP_571520.1">
    <property type="nucleotide sequence ID" value="XM_571520.1"/>
</dbReference>
<dbReference type="RefSeq" id="XP_571521.1">
    <property type="nucleotide sequence ID" value="XM_571521.1"/>
</dbReference>
<dbReference type="SMR" id="P0CO86"/>
<dbReference type="FunCoup" id="P0CO86">
    <property type="interactions" value="389"/>
</dbReference>
<dbReference type="STRING" id="214684.P0CO86"/>
<dbReference type="PaxDb" id="214684-P0CO86"/>
<dbReference type="EnsemblFungi" id="AAW44213">
    <property type="protein sequence ID" value="AAW44213"/>
    <property type="gene ID" value="CNF01960"/>
</dbReference>
<dbReference type="GeneID" id="3258090"/>
<dbReference type="KEGG" id="cne:CNF01960"/>
<dbReference type="VEuPathDB" id="FungiDB:CNF01960"/>
<dbReference type="eggNOG" id="KOG3001">
    <property type="taxonomic scope" value="Eukaryota"/>
</dbReference>
<dbReference type="HOGENOM" id="CLU_039566_1_1_1"/>
<dbReference type="InParanoid" id="P0CO86"/>
<dbReference type="OMA" id="HKFFDIE"/>
<dbReference type="OrthoDB" id="124855at2759"/>
<dbReference type="Proteomes" id="UP000002149">
    <property type="component" value="Chromosome 6"/>
</dbReference>
<dbReference type="GO" id="GO:0035267">
    <property type="term" value="C:NuA4 histone acetyltransferase complex"/>
    <property type="evidence" value="ECO:0000318"/>
    <property type="project" value="GO_Central"/>
</dbReference>
<dbReference type="GO" id="GO:0032221">
    <property type="term" value="C:Rpd3S complex"/>
    <property type="evidence" value="ECO:0000318"/>
    <property type="project" value="GO_Central"/>
</dbReference>
<dbReference type="GO" id="GO:0006338">
    <property type="term" value="P:chromatin remodeling"/>
    <property type="evidence" value="ECO:0007669"/>
    <property type="project" value="UniProtKB-ARBA"/>
</dbReference>
<dbReference type="GO" id="GO:0006281">
    <property type="term" value="P:DNA repair"/>
    <property type="evidence" value="ECO:0007669"/>
    <property type="project" value="UniProtKB-KW"/>
</dbReference>
<dbReference type="GO" id="GO:0006355">
    <property type="term" value="P:regulation of DNA-templated transcription"/>
    <property type="evidence" value="ECO:0007669"/>
    <property type="project" value="InterPro"/>
</dbReference>
<dbReference type="FunFam" id="1.10.274.30:FF:000004">
    <property type="entry name" value="Putative Chromatin modification-related protein eaf3"/>
    <property type="match status" value="1"/>
</dbReference>
<dbReference type="FunFam" id="2.30.30.140:FF:000104">
    <property type="entry name" value="Unplaced genomic scaffold supercont2.8, whole genome shotgun sequence"/>
    <property type="match status" value="1"/>
</dbReference>
<dbReference type="Gene3D" id="2.30.30.140">
    <property type="match status" value="1"/>
</dbReference>
<dbReference type="Gene3D" id="1.10.274.30">
    <property type="entry name" value="MRG domain"/>
    <property type="match status" value="1"/>
</dbReference>
<dbReference type="InterPro" id="IPR016197">
    <property type="entry name" value="Chromo-like_dom_sf"/>
</dbReference>
<dbReference type="InterPro" id="IPR000953">
    <property type="entry name" value="Chromo/chromo_shadow_dom"/>
</dbReference>
<dbReference type="InterPro" id="IPR008676">
    <property type="entry name" value="MRG"/>
</dbReference>
<dbReference type="InterPro" id="IPR038217">
    <property type="entry name" value="MRG_C_sf"/>
</dbReference>
<dbReference type="InterPro" id="IPR026541">
    <property type="entry name" value="MRG_dom"/>
</dbReference>
<dbReference type="InterPro" id="IPR053820">
    <property type="entry name" value="MSL3_chromo-like"/>
</dbReference>
<dbReference type="PANTHER" id="PTHR10880">
    <property type="entry name" value="MORTALITY FACTOR 4-LIKE PROTEIN"/>
    <property type="match status" value="1"/>
</dbReference>
<dbReference type="PANTHER" id="PTHR10880:SF15">
    <property type="entry name" value="MSL COMPLEX SUBUNIT 3"/>
    <property type="match status" value="1"/>
</dbReference>
<dbReference type="Pfam" id="PF05712">
    <property type="entry name" value="MRG"/>
    <property type="match status" value="1"/>
</dbReference>
<dbReference type="Pfam" id="PF22732">
    <property type="entry name" value="MSL3_chromo-like"/>
    <property type="match status" value="1"/>
</dbReference>
<dbReference type="PIRSF" id="PIRSF038133">
    <property type="entry name" value="HAT_Nua4_EAF3/MRG15"/>
    <property type="match status" value="1"/>
</dbReference>
<dbReference type="SMART" id="SM00298">
    <property type="entry name" value="CHROMO"/>
    <property type="match status" value="1"/>
</dbReference>
<dbReference type="SUPFAM" id="SSF54160">
    <property type="entry name" value="Chromo domain-like"/>
    <property type="match status" value="1"/>
</dbReference>
<dbReference type="PROSITE" id="PS51640">
    <property type="entry name" value="MRG"/>
    <property type="match status" value="1"/>
</dbReference>
<keyword id="KW-0156">Chromatin regulator</keyword>
<keyword id="KW-0227">DNA damage</keyword>
<keyword id="KW-0234">DNA repair</keyword>
<keyword id="KW-0539">Nucleus</keyword>
<keyword id="KW-1185">Reference proteome</keyword>
<keyword id="KW-0804">Transcription</keyword>
<keyword id="KW-0805">Transcription regulation</keyword>
<name>EAF3_CRYNJ</name>
<protein>
    <recommendedName>
        <fullName>Chromatin modification-related protein EAF3</fullName>
    </recommendedName>
</protein>
<proteinExistence type="inferred from homology"/>
<sequence>MAGAVPQFMVDEYVLAYHGPLLYEARVILAEVWDESNTLLGTVGPHYFIHYKGWKQTWDEWVPESRLLKLNEAGFAKRRALLDAQAKKGRSTGGSGGTGSPGAGKGGLKDKKKDTKKRGRDAMESESDFMKRPEVKIVIPDVLKLVLVDDWENVTKNNQLVALPRKPNVRELLEEYRQYASASKKQERSDRATALLSEIISGITLYFDKALGNNLLYRFERAQYVEQKRQNPEKPMSEIYGAEHLLRLFVNFGPFIAYTNIDTESLNILRDYINDIMQWMIKEQKRLFMKEYEETTTHYQNLSRS</sequence>
<accession>P0CO86</accession>
<accession>B6YPM2</accession>
<accession>Q55QR4</accession>
<accession>Q5KFF1</accession>
<comment type="function">
    <text evidence="1">Involved in deacetylation of histones, chromatin assembly and chromosome segregation. May act as a transcriptional oscillator, directing histone deacetylases to specific chromosomal domains. Component of the NuA4 histone acetyltransferase complex which is involved in transcriptional activation of selected genes principally by acetylation of nucleosomal histone H4 and H2A. The NuA4 complex is also involved in DNA repair (By similarity).</text>
</comment>
<comment type="subunit">
    <text evidence="1">Component of the NuA4 histone acetyltransferase complex.</text>
</comment>
<comment type="subcellular location">
    <subcellularLocation>
        <location evidence="3">Nucleus</location>
    </subcellularLocation>
</comment>
<comment type="similarity">
    <text evidence="5">Belongs to the MRG family.</text>
</comment>
<reference key="1">
    <citation type="journal article" date="2005" name="Science">
        <title>The genome of the basidiomycetous yeast and human pathogen Cryptococcus neoformans.</title>
        <authorList>
            <person name="Loftus B.J."/>
            <person name="Fung E."/>
            <person name="Roncaglia P."/>
            <person name="Rowley D."/>
            <person name="Amedeo P."/>
            <person name="Bruno D."/>
            <person name="Vamathevan J."/>
            <person name="Miranda M."/>
            <person name="Anderson I.J."/>
            <person name="Fraser J.A."/>
            <person name="Allen J.E."/>
            <person name="Bosdet I.E."/>
            <person name="Brent M.R."/>
            <person name="Chiu R."/>
            <person name="Doering T.L."/>
            <person name="Donlin M.J."/>
            <person name="D'Souza C.A."/>
            <person name="Fox D.S."/>
            <person name="Grinberg V."/>
            <person name="Fu J."/>
            <person name="Fukushima M."/>
            <person name="Haas B.J."/>
            <person name="Huang J.C."/>
            <person name="Janbon G."/>
            <person name="Jones S.J.M."/>
            <person name="Koo H.L."/>
            <person name="Krzywinski M.I."/>
            <person name="Kwon-Chung K.J."/>
            <person name="Lengeler K.B."/>
            <person name="Maiti R."/>
            <person name="Marra M.A."/>
            <person name="Marra R.E."/>
            <person name="Mathewson C.A."/>
            <person name="Mitchell T.G."/>
            <person name="Pertea M."/>
            <person name="Riggs F.R."/>
            <person name="Salzberg S.L."/>
            <person name="Schein J.E."/>
            <person name="Shvartsbeyn A."/>
            <person name="Shin H."/>
            <person name="Shumway M."/>
            <person name="Specht C.A."/>
            <person name="Suh B.B."/>
            <person name="Tenney A."/>
            <person name="Utterback T.R."/>
            <person name="Wickes B.L."/>
            <person name="Wortman J.R."/>
            <person name="Wye N.H."/>
            <person name="Kronstad J.W."/>
            <person name="Lodge J.K."/>
            <person name="Heitman J."/>
            <person name="Davis R.W."/>
            <person name="Fraser C.M."/>
            <person name="Hyman R.W."/>
        </authorList>
    </citation>
    <scope>NUCLEOTIDE SEQUENCE [LARGE SCALE GENOMIC DNA]</scope>
    <source>
        <strain>JEC21 / ATCC MYA-565</strain>
    </source>
</reference>
<organism>
    <name type="scientific">Cryptococcus neoformans var. neoformans serotype D (strain JEC21 / ATCC MYA-565)</name>
    <name type="common">Filobasidiella neoformans</name>
    <dbReference type="NCBI Taxonomy" id="214684"/>
    <lineage>
        <taxon>Eukaryota</taxon>
        <taxon>Fungi</taxon>
        <taxon>Dikarya</taxon>
        <taxon>Basidiomycota</taxon>
        <taxon>Agaricomycotina</taxon>
        <taxon>Tremellomycetes</taxon>
        <taxon>Tremellales</taxon>
        <taxon>Cryptococcaceae</taxon>
        <taxon>Cryptococcus</taxon>
        <taxon>Cryptococcus neoformans species complex</taxon>
    </lineage>
</organism>
<evidence type="ECO:0000250" key="1"/>
<evidence type="ECO:0000255" key="2"/>
<evidence type="ECO:0000255" key="3">
    <source>
        <dbReference type="PROSITE-ProRule" id="PRU00972"/>
    </source>
</evidence>
<evidence type="ECO:0000256" key="4">
    <source>
        <dbReference type="SAM" id="MobiDB-lite"/>
    </source>
</evidence>
<evidence type="ECO:0000305" key="5"/>
<feature type="chain" id="PRO_0000088776" description="Chromatin modification-related protein EAF3">
    <location>
        <begin position="1"/>
        <end position="305"/>
    </location>
</feature>
<feature type="domain" description="Tudor-knot" evidence="2">
    <location>
        <begin position="14"/>
        <end position="67"/>
    </location>
</feature>
<feature type="domain" description="MRG" evidence="3">
    <location>
        <begin position="131"/>
        <end position="304"/>
    </location>
</feature>
<feature type="region of interest" description="Disordered" evidence="4">
    <location>
        <begin position="86"/>
        <end position="127"/>
    </location>
</feature>
<feature type="compositionally biased region" description="Gly residues" evidence="4">
    <location>
        <begin position="91"/>
        <end position="106"/>
    </location>
</feature>
<gene>
    <name type="primary">EAF3</name>
    <name type="ordered locus">CNF01960</name>
</gene>